<organism>
    <name type="scientific">Streptococcus pyogenes serotype M18 (strain MGAS8232)</name>
    <dbReference type="NCBI Taxonomy" id="186103"/>
    <lineage>
        <taxon>Bacteria</taxon>
        <taxon>Bacillati</taxon>
        <taxon>Bacillota</taxon>
        <taxon>Bacilli</taxon>
        <taxon>Lactobacillales</taxon>
        <taxon>Streptococcaceae</taxon>
        <taxon>Streptococcus</taxon>
    </lineage>
</organism>
<sequence length="421" mass="45369">MKLLVVGSGGREHAIAKKLLASKGVDQVFVAPGNDGMTLDGLDLVNIVVSEHSRLIAFAKENEISWAFIGPDDALAAGIVDDFNSAGLRAFGPTKAAAELEWSKDFAKEIMVKYNVPTAAYGTFSDFEKAKAYIEEQGAPIVVKADGLALGKGVVVAETVEQAVEAAQEMLLDNKFGDSGARVVIEEFLDGEEFSLFAFVNGDKFYIMPTAQDHKRAFDGDKGPNTGGMGAYAPVPHLPQSVVDTAVETIVRPVLEGMVAEGRPYLGVLYVGLILTADGPKVIEFNLRFGDPETQIILPRLTSDFAQNIDDIMMGIEPYITWQNDGVTLGVVVASEGYPLDYEKGVPLPEKTDGDIITYYAGAKFAENSKALLSNGGRVYMLVTTEDSVKAGQDKIYTQLAQQDTTGLFYRNDIGSKAIRE</sequence>
<keyword id="KW-0067">ATP-binding</keyword>
<keyword id="KW-0436">Ligase</keyword>
<keyword id="KW-0460">Magnesium</keyword>
<keyword id="KW-0464">Manganese</keyword>
<keyword id="KW-0479">Metal-binding</keyword>
<keyword id="KW-0547">Nucleotide-binding</keyword>
<keyword id="KW-0658">Purine biosynthesis</keyword>
<accession>Q8P308</accession>
<proteinExistence type="inferred from homology"/>
<reference key="1">
    <citation type="journal article" date="2002" name="Proc. Natl. Acad. Sci. U.S.A.">
        <title>Genome sequence and comparative microarray analysis of serotype M18 group A Streptococcus strains associated with acute rheumatic fever outbreaks.</title>
        <authorList>
            <person name="Smoot J.C."/>
            <person name="Barbian K.D."/>
            <person name="Van Gompel J.J."/>
            <person name="Smoot L.M."/>
            <person name="Chaussee M.S."/>
            <person name="Sylva G.L."/>
            <person name="Sturdevant D.E."/>
            <person name="Ricklefs S.M."/>
            <person name="Porcella S.F."/>
            <person name="Parkins L.D."/>
            <person name="Beres S.B."/>
            <person name="Campbell D.S."/>
            <person name="Smith T.M."/>
            <person name="Zhang Q."/>
            <person name="Kapur V."/>
            <person name="Daly J.A."/>
            <person name="Veasy L.G."/>
            <person name="Musser J.M."/>
        </authorList>
    </citation>
    <scope>NUCLEOTIDE SEQUENCE [LARGE SCALE GENOMIC DNA]</scope>
    <source>
        <strain>MGAS8232</strain>
    </source>
</reference>
<dbReference type="EC" id="6.3.4.13" evidence="2"/>
<dbReference type="EMBL" id="AE009949">
    <property type="protein sequence ID" value="AAL96861.1"/>
    <property type="molecule type" value="Genomic_DNA"/>
</dbReference>
<dbReference type="RefSeq" id="WP_011017234.1">
    <property type="nucleotide sequence ID" value="NC_003485.1"/>
</dbReference>
<dbReference type="SMR" id="Q8P308"/>
<dbReference type="KEGG" id="spm:spyM18_0032"/>
<dbReference type="HOGENOM" id="CLU_027420_3_1_9"/>
<dbReference type="UniPathway" id="UPA00074">
    <property type="reaction ID" value="UER00125"/>
</dbReference>
<dbReference type="GO" id="GO:0005524">
    <property type="term" value="F:ATP binding"/>
    <property type="evidence" value="ECO:0007669"/>
    <property type="project" value="UniProtKB-KW"/>
</dbReference>
<dbReference type="GO" id="GO:0046872">
    <property type="term" value="F:metal ion binding"/>
    <property type="evidence" value="ECO:0007669"/>
    <property type="project" value="UniProtKB-KW"/>
</dbReference>
<dbReference type="GO" id="GO:0004637">
    <property type="term" value="F:phosphoribosylamine-glycine ligase activity"/>
    <property type="evidence" value="ECO:0007669"/>
    <property type="project" value="UniProtKB-UniRule"/>
</dbReference>
<dbReference type="GO" id="GO:0006189">
    <property type="term" value="P:'de novo' IMP biosynthetic process"/>
    <property type="evidence" value="ECO:0007669"/>
    <property type="project" value="UniProtKB-UniRule"/>
</dbReference>
<dbReference type="GO" id="GO:0009113">
    <property type="term" value="P:purine nucleobase biosynthetic process"/>
    <property type="evidence" value="ECO:0007669"/>
    <property type="project" value="InterPro"/>
</dbReference>
<dbReference type="FunFam" id="3.30.1490.20:FF:000006">
    <property type="entry name" value="phosphoribosylamine--glycine ligase, chloroplastic-like"/>
    <property type="match status" value="1"/>
</dbReference>
<dbReference type="Gene3D" id="3.40.50.20">
    <property type="match status" value="1"/>
</dbReference>
<dbReference type="Gene3D" id="3.30.1490.20">
    <property type="entry name" value="ATP-grasp fold, A domain"/>
    <property type="match status" value="1"/>
</dbReference>
<dbReference type="Gene3D" id="3.30.470.20">
    <property type="entry name" value="ATP-grasp fold, B domain"/>
    <property type="match status" value="1"/>
</dbReference>
<dbReference type="Gene3D" id="3.90.600.10">
    <property type="entry name" value="Phosphoribosylglycinamide synthetase, C-terminal domain"/>
    <property type="match status" value="1"/>
</dbReference>
<dbReference type="HAMAP" id="MF_00138">
    <property type="entry name" value="GARS"/>
    <property type="match status" value="1"/>
</dbReference>
<dbReference type="InterPro" id="IPR011761">
    <property type="entry name" value="ATP-grasp"/>
</dbReference>
<dbReference type="InterPro" id="IPR013815">
    <property type="entry name" value="ATP_grasp_subdomain_1"/>
</dbReference>
<dbReference type="InterPro" id="IPR016185">
    <property type="entry name" value="PreATP-grasp_dom_sf"/>
</dbReference>
<dbReference type="InterPro" id="IPR020561">
    <property type="entry name" value="PRibGlycinamid_synth_ATP-grasp"/>
</dbReference>
<dbReference type="InterPro" id="IPR000115">
    <property type="entry name" value="PRibGlycinamide_synth"/>
</dbReference>
<dbReference type="InterPro" id="IPR020560">
    <property type="entry name" value="PRibGlycinamide_synth_C-dom"/>
</dbReference>
<dbReference type="InterPro" id="IPR037123">
    <property type="entry name" value="PRibGlycinamide_synth_C_sf"/>
</dbReference>
<dbReference type="InterPro" id="IPR020559">
    <property type="entry name" value="PRibGlycinamide_synth_CS"/>
</dbReference>
<dbReference type="InterPro" id="IPR020562">
    <property type="entry name" value="PRibGlycinamide_synth_N"/>
</dbReference>
<dbReference type="InterPro" id="IPR011054">
    <property type="entry name" value="Rudment_hybrid_motif"/>
</dbReference>
<dbReference type="NCBIfam" id="TIGR00877">
    <property type="entry name" value="purD"/>
    <property type="match status" value="1"/>
</dbReference>
<dbReference type="PANTHER" id="PTHR43472">
    <property type="entry name" value="PHOSPHORIBOSYLAMINE--GLYCINE LIGASE"/>
    <property type="match status" value="1"/>
</dbReference>
<dbReference type="PANTHER" id="PTHR43472:SF1">
    <property type="entry name" value="PHOSPHORIBOSYLAMINE--GLYCINE LIGASE, CHLOROPLASTIC"/>
    <property type="match status" value="1"/>
</dbReference>
<dbReference type="Pfam" id="PF01071">
    <property type="entry name" value="GARS_A"/>
    <property type="match status" value="1"/>
</dbReference>
<dbReference type="Pfam" id="PF02843">
    <property type="entry name" value="GARS_C"/>
    <property type="match status" value="1"/>
</dbReference>
<dbReference type="Pfam" id="PF02844">
    <property type="entry name" value="GARS_N"/>
    <property type="match status" value="1"/>
</dbReference>
<dbReference type="SMART" id="SM01209">
    <property type="entry name" value="GARS_A"/>
    <property type="match status" value="1"/>
</dbReference>
<dbReference type="SMART" id="SM01210">
    <property type="entry name" value="GARS_C"/>
    <property type="match status" value="1"/>
</dbReference>
<dbReference type="SUPFAM" id="SSF56059">
    <property type="entry name" value="Glutathione synthetase ATP-binding domain-like"/>
    <property type="match status" value="1"/>
</dbReference>
<dbReference type="SUPFAM" id="SSF52440">
    <property type="entry name" value="PreATP-grasp domain"/>
    <property type="match status" value="1"/>
</dbReference>
<dbReference type="SUPFAM" id="SSF51246">
    <property type="entry name" value="Rudiment single hybrid motif"/>
    <property type="match status" value="1"/>
</dbReference>
<dbReference type="PROSITE" id="PS50975">
    <property type="entry name" value="ATP_GRASP"/>
    <property type="match status" value="1"/>
</dbReference>
<dbReference type="PROSITE" id="PS00184">
    <property type="entry name" value="GARS"/>
    <property type="match status" value="1"/>
</dbReference>
<protein>
    <recommendedName>
        <fullName evidence="2">Phosphoribosylamine--glycine ligase</fullName>
        <ecNumber evidence="2">6.3.4.13</ecNumber>
    </recommendedName>
    <alternativeName>
        <fullName evidence="2">GARS</fullName>
    </alternativeName>
    <alternativeName>
        <fullName evidence="2">Glycinamide ribonucleotide synthetase</fullName>
    </alternativeName>
    <alternativeName>
        <fullName evidence="2">Phosphoribosylglycinamide synthetase</fullName>
    </alternativeName>
</protein>
<feature type="chain" id="PRO_0000151492" description="Phosphoribosylamine--glycine ligase">
    <location>
        <begin position="1"/>
        <end position="421"/>
    </location>
</feature>
<feature type="domain" description="ATP-grasp" evidence="2">
    <location>
        <begin position="108"/>
        <end position="314"/>
    </location>
</feature>
<feature type="binding site" evidence="2">
    <location>
        <begin position="134"/>
        <end position="195"/>
    </location>
    <ligand>
        <name>ATP</name>
        <dbReference type="ChEBI" id="CHEBI:30616"/>
    </ligand>
</feature>
<feature type="binding site" evidence="2">
    <location>
        <position position="284"/>
    </location>
    <ligand>
        <name>Mg(2+)</name>
        <dbReference type="ChEBI" id="CHEBI:18420"/>
    </ligand>
</feature>
<feature type="binding site" evidence="2">
    <location>
        <position position="286"/>
    </location>
    <ligand>
        <name>Mg(2+)</name>
        <dbReference type="ChEBI" id="CHEBI:18420"/>
    </ligand>
</feature>
<name>PUR2_STRP8</name>
<comment type="catalytic activity">
    <reaction evidence="2">
        <text>5-phospho-beta-D-ribosylamine + glycine + ATP = N(1)-(5-phospho-beta-D-ribosyl)glycinamide + ADP + phosphate + H(+)</text>
        <dbReference type="Rhea" id="RHEA:17453"/>
        <dbReference type="ChEBI" id="CHEBI:15378"/>
        <dbReference type="ChEBI" id="CHEBI:30616"/>
        <dbReference type="ChEBI" id="CHEBI:43474"/>
        <dbReference type="ChEBI" id="CHEBI:57305"/>
        <dbReference type="ChEBI" id="CHEBI:58681"/>
        <dbReference type="ChEBI" id="CHEBI:143788"/>
        <dbReference type="ChEBI" id="CHEBI:456216"/>
        <dbReference type="EC" id="6.3.4.13"/>
    </reaction>
</comment>
<comment type="cofactor">
    <cofactor evidence="1">
        <name>Mg(2+)</name>
        <dbReference type="ChEBI" id="CHEBI:18420"/>
    </cofactor>
    <cofactor evidence="1">
        <name>Mn(2+)</name>
        <dbReference type="ChEBI" id="CHEBI:29035"/>
    </cofactor>
    <text evidence="1">Binds 1 Mg(2+) or Mn(2+) ion per subunit.</text>
</comment>
<comment type="pathway">
    <text evidence="2">Purine metabolism; IMP biosynthesis via de novo pathway; N(1)-(5-phospho-D-ribosyl)glycinamide from 5-phospho-alpha-D-ribose 1-diphosphate: step 2/2.</text>
</comment>
<comment type="similarity">
    <text evidence="2">Belongs to the GARS family.</text>
</comment>
<evidence type="ECO:0000250" key="1"/>
<evidence type="ECO:0000255" key="2">
    <source>
        <dbReference type="HAMAP-Rule" id="MF_00138"/>
    </source>
</evidence>
<gene>
    <name evidence="2" type="primary">purD</name>
    <name type="ordered locus">spyM18_0032</name>
</gene>